<sequence>MLGIGTISRKIFGSPNDRKVKATRPVIAQINALEPEFEKLSDEGLKEKTEEFRKRALEGESLDALLPEAFANCREAARRALGLRAFDTQLMGAVFLHQGNIAEQKTGEGKTLTATFAAYLNGLTGRGVHIVTVNEYLAKRDAAWMGSVFGALGLTTGVAYSDMPEDEKRKAYASDITYATNNELGFDYLRDNMKSELDQIYQKQHNFAIVDEVDSILIDEARTPLIISGPSQDRSEMYKTVDAVIPQVRDDHFELDEKTRNVTFTDEGNEFLEEILHAQGLLEEGQSLYDPESTTVVHHVNQGLRAHKLFQRDKDYIVRDDNVVLIDEFTGRMMPGRRLSDGLHQAIEAKEGVDIKPENITLASVTFQNYFRLYDKLSGMTGTALTEAEEFMEIYGLGVVEVPTNKPIARVDEDDQVYRTAREKYEAMLEKIKESNAKGQPVLVGTTSIEKSEMLSNMLKQAGITHNVLNARQHEQEAQIVADAGKYGAVTIATNMAGRGTDIQLGGNVDLQVMNALTADPDADPEALRASIEAQHADEKAKVLAAGGLYVLASERHESRRIDNQLRGRSGRQGDPGRSSFFLSLEDDLMRIFGSERLEKVLKTLGLKEGEAIVHPWVNKSLERAQSKVEGRNFDIRKQLLKFDDVMNEQRKVIFGQRREIMEAKDLSEITTDMRHQVIDDFIEQYLPPNTYADQWDAEGLYAAVQEQLGIDVPVMDWVEEEGVDDEAIRERLVEATDKLMTEKAGQFGAENMRNIEKQLLLQAIDTKWREHLLTLEHLRSVVGFRGYAQRDPLNEYKNESFQLFESMLDSLREDVTQKLSQIRPMTEEEQQAMIEQIRAQQAAAQAAAAGPTVSAQAGPVAGPADAAVAFDENDPSTWGNPGRNEPCPCQSGKKFKHCHGRLI</sequence>
<organism>
    <name type="scientific">Roseobacter denitrificans (strain ATCC 33942 / OCh 114)</name>
    <name type="common">Erythrobacter sp. (strain OCh 114)</name>
    <name type="synonym">Roseobacter denitrificans</name>
    <dbReference type="NCBI Taxonomy" id="375451"/>
    <lineage>
        <taxon>Bacteria</taxon>
        <taxon>Pseudomonadati</taxon>
        <taxon>Pseudomonadota</taxon>
        <taxon>Alphaproteobacteria</taxon>
        <taxon>Rhodobacterales</taxon>
        <taxon>Roseobacteraceae</taxon>
        <taxon>Roseobacter</taxon>
    </lineage>
</organism>
<evidence type="ECO:0000255" key="1">
    <source>
        <dbReference type="HAMAP-Rule" id="MF_01382"/>
    </source>
</evidence>
<dbReference type="EC" id="7.4.2.8" evidence="1"/>
<dbReference type="EMBL" id="CP000362">
    <property type="protein sequence ID" value="ABG30101.1"/>
    <property type="molecule type" value="Genomic_DNA"/>
</dbReference>
<dbReference type="RefSeq" id="WP_011566723.1">
    <property type="nucleotide sequence ID" value="NC_008209.1"/>
</dbReference>
<dbReference type="SMR" id="Q16D42"/>
<dbReference type="STRING" id="375451.RD1_0382"/>
<dbReference type="KEGG" id="rde:RD1_0382"/>
<dbReference type="eggNOG" id="COG0653">
    <property type="taxonomic scope" value="Bacteria"/>
</dbReference>
<dbReference type="HOGENOM" id="CLU_005314_3_0_5"/>
<dbReference type="OrthoDB" id="9805579at2"/>
<dbReference type="Proteomes" id="UP000007029">
    <property type="component" value="Chromosome"/>
</dbReference>
<dbReference type="GO" id="GO:0031522">
    <property type="term" value="C:cell envelope Sec protein transport complex"/>
    <property type="evidence" value="ECO:0007669"/>
    <property type="project" value="TreeGrafter"/>
</dbReference>
<dbReference type="GO" id="GO:0005829">
    <property type="term" value="C:cytosol"/>
    <property type="evidence" value="ECO:0007669"/>
    <property type="project" value="TreeGrafter"/>
</dbReference>
<dbReference type="GO" id="GO:0005886">
    <property type="term" value="C:plasma membrane"/>
    <property type="evidence" value="ECO:0007669"/>
    <property type="project" value="UniProtKB-SubCell"/>
</dbReference>
<dbReference type="GO" id="GO:0005524">
    <property type="term" value="F:ATP binding"/>
    <property type="evidence" value="ECO:0007669"/>
    <property type="project" value="UniProtKB-UniRule"/>
</dbReference>
<dbReference type="GO" id="GO:0046872">
    <property type="term" value="F:metal ion binding"/>
    <property type="evidence" value="ECO:0007669"/>
    <property type="project" value="UniProtKB-KW"/>
</dbReference>
<dbReference type="GO" id="GO:0008564">
    <property type="term" value="F:protein-exporting ATPase activity"/>
    <property type="evidence" value="ECO:0007669"/>
    <property type="project" value="UniProtKB-EC"/>
</dbReference>
<dbReference type="GO" id="GO:0065002">
    <property type="term" value="P:intracellular protein transmembrane transport"/>
    <property type="evidence" value="ECO:0007669"/>
    <property type="project" value="UniProtKB-UniRule"/>
</dbReference>
<dbReference type="GO" id="GO:0017038">
    <property type="term" value="P:protein import"/>
    <property type="evidence" value="ECO:0007669"/>
    <property type="project" value="InterPro"/>
</dbReference>
<dbReference type="GO" id="GO:0006605">
    <property type="term" value="P:protein targeting"/>
    <property type="evidence" value="ECO:0007669"/>
    <property type="project" value="UniProtKB-UniRule"/>
</dbReference>
<dbReference type="GO" id="GO:0043952">
    <property type="term" value="P:protein transport by the Sec complex"/>
    <property type="evidence" value="ECO:0007669"/>
    <property type="project" value="TreeGrafter"/>
</dbReference>
<dbReference type="CDD" id="cd17928">
    <property type="entry name" value="DEXDc_SecA"/>
    <property type="match status" value="1"/>
</dbReference>
<dbReference type="CDD" id="cd18803">
    <property type="entry name" value="SF2_C_secA"/>
    <property type="match status" value="1"/>
</dbReference>
<dbReference type="FunFam" id="3.40.50.300:FF:000113">
    <property type="entry name" value="Preprotein translocase subunit SecA"/>
    <property type="match status" value="1"/>
</dbReference>
<dbReference type="FunFam" id="3.90.1440.10:FF:000001">
    <property type="entry name" value="Preprotein translocase subunit SecA"/>
    <property type="match status" value="1"/>
</dbReference>
<dbReference type="FunFam" id="1.10.3060.10:FF:000003">
    <property type="entry name" value="Protein translocase subunit SecA"/>
    <property type="match status" value="1"/>
</dbReference>
<dbReference type="Gene3D" id="1.10.3060.10">
    <property type="entry name" value="Helical scaffold and wing domains of SecA"/>
    <property type="match status" value="1"/>
</dbReference>
<dbReference type="Gene3D" id="3.40.50.300">
    <property type="entry name" value="P-loop containing nucleotide triphosphate hydrolases"/>
    <property type="match status" value="2"/>
</dbReference>
<dbReference type="Gene3D" id="3.90.1440.10">
    <property type="entry name" value="SecA, preprotein cross-linking domain"/>
    <property type="match status" value="1"/>
</dbReference>
<dbReference type="HAMAP" id="MF_01382">
    <property type="entry name" value="SecA"/>
    <property type="match status" value="1"/>
</dbReference>
<dbReference type="InterPro" id="IPR014001">
    <property type="entry name" value="Helicase_ATP-bd"/>
</dbReference>
<dbReference type="InterPro" id="IPR001650">
    <property type="entry name" value="Helicase_C-like"/>
</dbReference>
<dbReference type="InterPro" id="IPR027417">
    <property type="entry name" value="P-loop_NTPase"/>
</dbReference>
<dbReference type="InterPro" id="IPR004027">
    <property type="entry name" value="SEC_C_motif"/>
</dbReference>
<dbReference type="InterPro" id="IPR000185">
    <property type="entry name" value="SecA"/>
</dbReference>
<dbReference type="InterPro" id="IPR020937">
    <property type="entry name" value="SecA_CS"/>
</dbReference>
<dbReference type="InterPro" id="IPR011115">
    <property type="entry name" value="SecA_DEAD"/>
</dbReference>
<dbReference type="InterPro" id="IPR014018">
    <property type="entry name" value="SecA_motor_DEAD"/>
</dbReference>
<dbReference type="InterPro" id="IPR011130">
    <property type="entry name" value="SecA_preprotein_X-link_dom"/>
</dbReference>
<dbReference type="InterPro" id="IPR044722">
    <property type="entry name" value="SecA_SF2_C"/>
</dbReference>
<dbReference type="InterPro" id="IPR011116">
    <property type="entry name" value="SecA_Wing/Scaffold"/>
</dbReference>
<dbReference type="InterPro" id="IPR036266">
    <property type="entry name" value="SecA_Wing/Scaffold_sf"/>
</dbReference>
<dbReference type="InterPro" id="IPR036670">
    <property type="entry name" value="SecA_X-link_sf"/>
</dbReference>
<dbReference type="NCBIfam" id="NF009538">
    <property type="entry name" value="PRK12904.1"/>
    <property type="match status" value="1"/>
</dbReference>
<dbReference type="NCBIfam" id="TIGR00963">
    <property type="entry name" value="secA"/>
    <property type="match status" value="1"/>
</dbReference>
<dbReference type="PANTHER" id="PTHR30612:SF0">
    <property type="entry name" value="CHLOROPLAST PROTEIN-TRANSPORTING ATPASE"/>
    <property type="match status" value="1"/>
</dbReference>
<dbReference type="PANTHER" id="PTHR30612">
    <property type="entry name" value="SECA INNER MEMBRANE COMPONENT OF SEC PROTEIN SECRETION SYSTEM"/>
    <property type="match status" value="1"/>
</dbReference>
<dbReference type="Pfam" id="PF21090">
    <property type="entry name" value="P-loop_SecA"/>
    <property type="match status" value="1"/>
</dbReference>
<dbReference type="Pfam" id="PF02810">
    <property type="entry name" value="SEC-C"/>
    <property type="match status" value="1"/>
</dbReference>
<dbReference type="Pfam" id="PF07517">
    <property type="entry name" value="SecA_DEAD"/>
    <property type="match status" value="1"/>
</dbReference>
<dbReference type="Pfam" id="PF01043">
    <property type="entry name" value="SecA_PP_bind"/>
    <property type="match status" value="1"/>
</dbReference>
<dbReference type="Pfam" id="PF07516">
    <property type="entry name" value="SecA_SW"/>
    <property type="match status" value="1"/>
</dbReference>
<dbReference type="PRINTS" id="PR00906">
    <property type="entry name" value="SECA"/>
</dbReference>
<dbReference type="SMART" id="SM00957">
    <property type="entry name" value="SecA_DEAD"/>
    <property type="match status" value="1"/>
</dbReference>
<dbReference type="SMART" id="SM00958">
    <property type="entry name" value="SecA_PP_bind"/>
    <property type="match status" value="1"/>
</dbReference>
<dbReference type="SUPFAM" id="SSF81886">
    <property type="entry name" value="Helical scaffold and wing domains of SecA"/>
    <property type="match status" value="1"/>
</dbReference>
<dbReference type="SUPFAM" id="SSF52540">
    <property type="entry name" value="P-loop containing nucleoside triphosphate hydrolases"/>
    <property type="match status" value="2"/>
</dbReference>
<dbReference type="SUPFAM" id="SSF81767">
    <property type="entry name" value="Pre-protein crosslinking domain of SecA"/>
    <property type="match status" value="1"/>
</dbReference>
<dbReference type="PROSITE" id="PS01312">
    <property type="entry name" value="SECA"/>
    <property type="match status" value="1"/>
</dbReference>
<dbReference type="PROSITE" id="PS51196">
    <property type="entry name" value="SECA_MOTOR_DEAD"/>
    <property type="match status" value="1"/>
</dbReference>
<reference key="1">
    <citation type="journal article" date="2007" name="J. Bacteriol.">
        <title>The complete genome sequence of Roseobacter denitrificans reveals a mixotrophic rather than photosynthetic metabolism.</title>
        <authorList>
            <person name="Swingley W.D."/>
            <person name="Sadekar S."/>
            <person name="Mastrian S.D."/>
            <person name="Matthies H.J."/>
            <person name="Hao J."/>
            <person name="Ramos H."/>
            <person name="Acharya C.R."/>
            <person name="Conrad A.L."/>
            <person name="Taylor H.L."/>
            <person name="Dejesa L.C."/>
            <person name="Shah M.K."/>
            <person name="O'Huallachain M.E."/>
            <person name="Lince M.T."/>
            <person name="Blankenship R.E."/>
            <person name="Beatty J.T."/>
            <person name="Touchman J.W."/>
        </authorList>
    </citation>
    <scope>NUCLEOTIDE SEQUENCE [LARGE SCALE GENOMIC DNA]</scope>
    <source>
        <strain>ATCC 33942 / OCh 114</strain>
    </source>
</reference>
<feature type="chain" id="PRO_0000320980" description="Protein translocase subunit SecA">
    <location>
        <begin position="1"/>
        <end position="904"/>
    </location>
</feature>
<feature type="binding site" evidence="1">
    <location>
        <position position="89"/>
    </location>
    <ligand>
        <name>ATP</name>
        <dbReference type="ChEBI" id="CHEBI:30616"/>
    </ligand>
</feature>
<feature type="binding site" evidence="1">
    <location>
        <begin position="107"/>
        <end position="111"/>
    </location>
    <ligand>
        <name>ATP</name>
        <dbReference type="ChEBI" id="CHEBI:30616"/>
    </ligand>
</feature>
<feature type="binding site" evidence="1">
    <location>
        <position position="502"/>
    </location>
    <ligand>
        <name>ATP</name>
        <dbReference type="ChEBI" id="CHEBI:30616"/>
    </ligand>
</feature>
<feature type="binding site" evidence="1">
    <location>
        <position position="888"/>
    </location>
    <ligand>
        <name>Zn(2+)</name>
        <dbReference type="ChEBI" id="CHEBI:29105"/>
    </ligand>
</feature>
<feature type="binding site" evidence="1">
    <location>
        <position position="890"/>
    </location>
    <ligand>
        <name>Zn(2+)</name>
        <dbReference type="ChEBI" id="CHEBI:29105"/>
    </ligand>
</feature>
<feature type="binding site" evidence="1">
    <location>
        <position position="899"/>
    </location>
    <ligand>
        <name>Zn(2+)</name>
        <dbReference type="ChEBI" id="CHEBI:29105"/>
    </ligand>
</feature>
<feature type="binding site" evidence="1">
    <location>
        <position position="900"/>
    </location>
    <ligand>
        <name>Zn(2+)</name>
        <dbReference type="ChEBI" id="CHEBI:29105"/>
    </ligand>
</feature>
<keyword id="KW-0067">ATP-binding</keyword>
<keyword id="KW-0997">Cell inner membrane</keyword>
<keyword id="KW-1003">Cell membrane</keyword>
<keyword id="KW-0963">Cytoplasm</keyword>
<keyword id="KW-0472">Membrane</keyword>
<keyword id="KW-0479">Metal-binding</keyword>
<keyword id="KW-0547">Nucleotide-binding</keyword>
<keyword id="KW-0653">Protein transport</keyword>
<keyword id="KW-1185">Reference proteome</keyword>
<keyword id="KW-1278">Translocase</keyword>
<keyword id="KW-0811">Translocation</keyword>
<keyword id="KW-0813">Transport</keyword>
<keyword id="KW-0862">Zinc</keyword>
<protein>
    <recommendedName>
        <fullName evidence="1">Protein translocase subunit SecA</fullName>
        <ecNumber evidence="1">7.4.2.8</ecNumber>
    </recommendedName>
</protein>
<proteinExistence type="inferred from homology"/>
<name>SECA_ROSDO</name>
<comment type="function">
    <text evidence="1">Part of the Sec protein translocase complex. Interacts with the SecYEG preprotein conducting channel. Has a central role in coupling the hydrolysis of ATP to the transfer of proteins into and across the cell membrane, serving both as a receptor for the preprotein-SecB complex and as an ATP-driven molecular motor driving the stepwise translocation of polypeptide chains across the membrane.</text>
</comment>
<comment type="catalytic activity">
    <reaction evidence="1">
        <text>ATP + H2O + cellular proteinSide 1 = ADP + phosphate + cellular proteinSide 2.</text>
        <dbReference type="EC" id="7.4.2.8"/>
    </reaction>
</comment>
<comment type="cofactor">
    <cofactor evidence="1">
        <name>Zn(2+)</name>
        <dbReference type="ChEBI" id="CHEBI:29105"/>
    </cofactor>
    <text evidence="1">May bind 1 zinc ion per subunit.</text>
</comment>
<comment type="subunit">
    <text evidence="1">Monomer and homodimer. Part of the essential Sec protein translocation apparatus which comprises SecA, SecYEG and auxiliary proteins SecDF-YajC and YidC.</text>
</comment>
<comment type="subcellular location">
    <subcellularLocation>
        <location evidence="1">Cell inner membrane</location>
        <topology evidence="1">Peripheral membrane protein</topology>
        <orientation evidence="1">Cytoplasmic side</orientation>
    </subcellularLocation>
    <subcellularLocation>
        <location evidence="1">Cytoplasm</location>
    </subcellularLocation>
    <text evidence="1">Distribution is 50-50.</text>
</comment>
<comment type="similarity">
    <text evidence="1">Belongs to the SecA family.</text>
</comment>
<gene>
    <name evidence="1" type="primary">secA</name>
    <name type="ordered locus">RD1_0382</name>
</gene>
<accession>Q16D42</accession>